<organism>
    <name type="scientific">Drosophila teissieri</name>
    <name type="common">Fruit fly</name>
    <dbReference type="NCBI Taxonomy" id="7243"/>
    <lineage>
        <taxon>Eukaryota</taxon>
        <taxon>Metazoa</taxon>
        <taxon>Ecdysozoa</taxon>
        <taxon>Arthropoda</taxon>
        <taxon>Hexapoda</taxon>
        <taxon>Insecta</taxon>
        <taxon>Pterygota</taxon>
        <taxon>Neoptera</taxon>
        <taxon>Endopterygota</taxon>
        <taxon>Diptera</taxon>
        <taxon>Brachycera</taxon>
        <taxon>Muscomorpha</taxon>
        <taxon>Ephydroidea</taxon>
        <taxon>Drosophilidae</taxon>
        <taxon>Drosophila</taxon>
        <taxon>Sophophora</taxon>
    </lineage>
</organism>
<comment type="function">
    <text>Destroys radicals which are normally produced within the cells and which are toxic to biological systems.</text>
</comment>
<comment type="catalytic activity">
    <reaction>
        <text>2 superoxide + 2 H(+) = H2O2 + O2</text>
        <dbReference type="Rhea" id="RHEA:20696"/>
        <dbReference type="ChEBI" id="CHEBI:15378"/>
        <dbReference type="ChEBI" id="CHEBI:15379"/>
        <dbReference type="ChEBI" id="CHEBI:16240"/>
        <dbReference type="ChEBI" id="CHEBI:18421"/>
        <dbReference type="EC" id="1.15.1.1"/>
    </reaction>
</comment>
<comment type="cofactor">
    <cofactor evidence="1">
        <name>Cu cation</name>
        <dbReference type="ChEBI" id="CHEBI:23378"/>
    </cofactor>
    <text evidence="1">Binds 1 copper ion per subunit.</text>
</comment>
<comment type="cofactor">
    <cofactor evidence="1">
        <name>Zn(2+)</name>
        <dbReference type="ChEBI" id="CHEBI:29105"/>
    </cofactor>
    <text evidence="1">Binds 1 zinc ion per subunit.</text>
</comment>
<comment type="subunit">
    <text evidence="1">Homodimer.</text>
</comment>
<comment type="subcellular location">
    <subcellularLocation>
        <location evidence="1">Cytoplasm</location>
    </subcellularLocation>
</comment>
<comment type="similarity">
    <text evidence="3">Belongs to the Cu-Zn superoxide dismutase family.</text>
</comment>
<gene>
    <name evidence="2" type="primary">Sod1</name>
    <name evidence="2" type="synonym">Sod</name>
</gene>
<protein>
    <recommendedName>
        <fullName evidence="2">Superoxide dismutase [Cu-Zn]</fullName>
        <ecNumber>1.15.1.1</ecNumber>
    </recommendedName>
    <alternativeName>
        <fullName evidence="2">Superoxide dismutase 1</fullName>
    </alternativeName>
</protein>
<evidence type="ECO:0000250" key="1"/>
<evidence type="ECO:0000250" key="2">
    <source>
        <dbReference type="UniProtKB" id="P61851"/>
    </source>
</evidence>
<evidence type="ECO:0000305" key="3"/>
<dbReference type="EC" id="1.15.1.1"/>
<dbReference type="EMBL" id="AF127160">
    <property type="protein sequence ID" value="AAF23599.1"/>
    <property type="molecule type" value="Genomic_DNA"/>
</dbReference>
<dbReference type="SMR" id="Q9U4X2"/>
<dbReference type="EnsemblMetazoa" id="XM_043791585.1">
    <property type="protein sequence ID" value="XP_043647520.1"/>
    <property type="gene ID" value="LOC122616213"/>
</dbReference>
<dbReference type="GO" id="GO:0005737">
    <property type="term" value="C:cytoplasm"/>
    <property type="evidence" value="ECO:0007669"/>
    <property type="project" value="UniProtKB-SubCell"/>
</dbReference>
<dbReference type="GO" id="GO:0005507">
    <property type="term" value="F:copper ion binding"/>
    <property type="evidence" value="ECO:0007669"/>
    <property type="project" value="InterPro"/>
</dbReference>
<dbReference type="GO" id="GO:0004784">
    <property type="term" value="F:superoxide dismutase activity"/>
    <property type="evidence" value="ECO:0007669"/>
    <property type="project" value="UniProtKB-EC"/>
</dbReference>
<dbReference type="CDD" id="cd00305">
    <property type="entry name" value="Cu-Zn_Superoxide_Dismutase"/>
    <property type="match status" value="1"/>
</dbReference>
<dbReference type="FunFam" id="2.60.40.200:FF:000001">
    <property type="entry name" value="Superoxide dismutase [Cu-Zn]"/>
    <property type="match status" value="1"/>
</dbReference>
<dbReference type="Gene3D" id="2.60.40.200">
    <property type="entry name" value="Superoxide dismutase, copper/zinc binding domain"/>
    <property type="match status" value="1"/>
</dbReference>
<dbReference type="InterPro" id="IPR036423">
    <property type="entry name" value="SOD-like_Cu/Zn_dom_sf"/>
</dbReference>
<dbReference type="InterPro" id="IPR024134">
    <property type="entry name" value="SOD_Cu/Zn_/chaperone"/>
</dbReference>
<dbReference type="InterPro" id="IPR018152">
    <property type="entry name" value="SOD_Cu/Zn_BS"/>
</dbReference>
<dbReference type="InterPro" id="IPR001424">
    <property type="entry name" value="SOD_Cu_Zn_dom"/>
</dbReference>
<dbReference type="PANTHER" id="PTHR10003">
    <property type="entry name" value="SUPEROXIDE DISMUTASE CU-ZN -RELATED"/>
    <property type="match status" value="1"/>
</dbReference>
<dbReference type="Pfam" id="PF00080">
    <property type="entry name" value="Sod_Cu"/>
    <property type="match status" value="1"/>
</dbReference>
<dbReference type="PRINTS" id="PR00068">
    <property type="entry name" value="CUZNDISMTASE"/>
</dbReference>
<dbReference type="SUPFAM" id="SSF49329">
    <property type="entry name" value="Cu,Zn superoxide dismutase-like"/>
    <property type="match status" value="1"/>
</dbReference>
<dbReference type="PROSITE" id="PS00087">
    <property type="entry name" value="SOD_CU_ZN_1"/>
    <property type="match status" value="1"/>
</dbReference>
<dbReference type="PROSITE" id="PS00332">
    <property type="entry name" value="SOD_CU_ZN_2"/>
    <property type="match status" value="1"/>
</dbReference>
<proteinExistence type="inferred from homology"/>
<sequence length="153" mass="15744">MVVKAVCVINGDAKGTVFFEQESSETPVKVSGEVCGLAKGLHGFHVHEFGDNTNGCMSSGPHFNPYGKEHGAPVDENRHLGDLGNIEATGDCPTKVSITDSKITLFGADSIIGRTVVVHADADDLGQGGHELSKSTGNAGARIGCGVIGIAKV</sequence>
<keyword id="KW-0049">Antioxidant</keyword>
<keyword id="KW-0186">Copper</keyword>
<keyword id="KW-0963">Cytoplasm</keyword>
<keyword id="KW-1015">Disulfide bond</keyword>
<keyword id="KW-0479">Metal-binding</keyword>
<keyword id="KW-0560">Oxidoreductase</keyword>
<keyword id="KW-0862">Zinc</keyword>
<feature type="initiator methionine" description="Removed" evidence="1">
    <location>
        <position position="1"/>
    </location>
</feature>
<feature type="chain" id="PRO_0000164096" description="Superoxide dismutase [Cu-Zn]">
    <location>
        <begin position="2"/>
        <end position="153"/>
    </location>
</feature>
<feature type="binding site" evidence="1">
    <location>
        <position position="45"/>
    </location>
    <ligand>
        <name>Cu cation</name>
        <dbReference type="ChEBI" id="CHEBI:23378"/>
        <note>catalytic</note>
    </ligand>
</feature>
<feature type="binding site" evidence="1">
    <location>
        <position position="47"/>
    </location>
    <ligand>
        <name>Cu cation</name>
        <dbReference type="ChEBI" id="CHEBI:23378"/>
        <note>catalytic</note>
    </ligand>
</feature>
<feature type="binding site" evidence="1">
    <location>
        <position position="62"/>
    </location>
    <ligand>
        <name>Cu cation</name>
        <dbReference type="ChEBI" id="CHEBI:23378"/>
        <note>catalytic</note>
    </ligand>
</feature>
<feature type="binding site" evidence="1">
    <location>
        <position position="62"/>
    </location>
    <ligand>
        <name>Zn(2+)</name>
        <dbReference type="ChEBI" id="CHEBI:29105"/>
        <note>structural</note>
    </ligand>
</feature>
<feature type="binding site" evidence="1">
    <location>
        <position position="70"/>
    </location>
    <ligand>
        <name>Zn(2+)</name>
        <dbReference type="ChEBI" id="CHEBI:29105"/>
        <note>structural</note>
    </ligand>
</feature>
<feature type="binding site" evidence="1">
    <location>
        <position position="79"/>
    </location>
    <ligand>
        <name>Zn(2+)</name>
        <dbReference type="ChEBI" id="CHEBI:29105"/>
        <note>structural</note>
    </ligand>
</feature>
<feature type="binding site" evidence="1">
    <location>
        <position position="82"/>
    </location>
    <ligand>
        <name>Zn(2+)</name>
        <dbReference type="ChEBI" id="CHEBI:29105"/>
        <note>structural</note>
    </ligand>
</feature>
<feature type="binding site" evidence="1">
    <location>
        <position position="119"/>
    </location>
    <ligand>
        <name>Cu cation</name>
        <dbReference type="ChEBI" id="CHEBI:23378"/>
        <note>catalytic</note>
    </ligand>
</feature>
<feature type="disulfide bond" evidence="1">
    <location>
        <begin position="56"/>
        <end position="145"/>
    </location>
</feature>
<accession>Q9U4X2</accession>
<name>SODC_DROTE</name>
<reference key="1">
    <citation type="submission" date="1999-02" db="EMBL/GenBank/DDBJ databases">
        <title>Phylogenetic analysis of Drosophila melanogaster group based on Cu-Zn superoxide dismutase gene sequences.</title>
        <authorList>
            <person name="Arxontaki K."/>
            <person name="Kastanis P."/>
            <person name="Tsakas S."/>
            <person name="Loukas M."/>
            <person name="Eliopoulos E."/>
        </authorList>
    </citation>
    <scope>NUCLEOTIDE SEQUENCE [GENOMIC DNA]</scope>
</reference>